<protein>
    <recommendedName>
        <fullName>Karatasin</fullName>
        <ecNumber evidence="1">3.4.22.-</ecNumber>
    </recommendedName>
</protein>
<organism>
    <name type="scientific">Bromelia plumieri</name>
    <name type="common">Karatas</name>
    <dbReference type="NCBI Taxonomy" id="4617"/>
    <lineage>
        <taxon>Eukaryota</taxon>
        <taxon>Viridiplantae</taxon>
        <taxon>Streptophyta</taxon>
        <taxon>Embryophyta</taxon>
        <taxon>Tracheophyta</taxon>
        <taxon>Spermatophyta</taxon>
        <taxon>Magnoliopsida</taxon>
        <taxon>Liliopsida</taxon>
        <taxon>Poales</taxon>
        <taxon>Bromeliaceae</taxon>
        <taxon>Bromelioideae</taxon>
        <taxon>Bromelia</taxon>
    </lineage>
</organism>
<comment type="subunit">
    <text>Dimer of two small subunits linked by disulfide bonds.</text>
</comment>
<comment type="similarity">
    <text evidence="2 3 4">Belongs to the peptidase C1 family.</text>
</comment>
<proteinExistence type="evidence at protein level"/>
<name>KARA_BROPL</name>
<evidence type="ECO:0000250" key="1">
    <source>
        <dbReference type="UniProtKB" id="P80884"/>
    </source>
</evidence>
<evidence type="ECO:0000255" key="2">
    <source>
        <dbReference type="PROSITE-ProRule" id="PRU10088"/>
    </source>
</evidence>
<evidence type="ECO:0000255" key="3">
    <source>
        <dbReference type="PROSITE-ProRule" id="PRU10089"/>
    </source>
</evidence>
<evidence type="ECO:0000255" key="4">
    <source>
        <dbReference type="PROSITE-ProRule" id="PRU10090"/>
    </source>
</evidence>
<keyword id="KW-0903">Direct protein sequencing</keyword>
<keyword id="KW-1015">Disulfide bond</keyword>
<keyword id="KW-0378">Hydrolase</keyword>
<keyword id="KW-0645">Protease</keyword>
<keyword id="KW-0788">Thiol protease</keyword>
<accession>P22442</accession>
<reference key="1">
    <citation type="journal article" date="1990" name="Agric. Biol. Chem.">
        <title>Subunit structure of karatasin, the proteinase isolated from Bromelia plumieri (karatas).</title>
        <authorList>
            <person name="Montes C."/>
            <person name="Amador M."/>
            <person name="Cuevas D."/>
            <person name="Cordoba F."/>
        </authorList>
    </citation>
    <scope>PROTEIN SEQUENCE</scope>
</reference>
<dbReference type="EC" id="3.4.22.-" evidence="1"/>
<dbReference type="PIR" id="PT0029">
    <property type="entry name" value="PT0029"/>
</dbReference>
<dbReference type="GO" id="GO:0008234">
    <property type="term" value="F:cysteine-type peptidase activity"/>
    <property type="evidence" value="ECO:0007669"/>
    <property type="project" value="UniProtKB-KW"/>
</dbReference>
<dbReference type="GO" id="GO:0006508">
    <property type="term" value="P:proteolysis"/>
    <property type="evidence" value="ECO:0007669"/>
    <property type="project" value="UniProtKB-KW"/>
</dbReference>
<feature type="chain" id="PRO_0000050560" description="Karatasin">
    <location>
        <begin position="1"/>
        <end position="14" status="greater than"/>
    </location>
</feature>
<feature type="non-terminal residue">
    <location>
        <position position="14"/>
    </location>
</feature>
<sequence length="14" mass="1604">VPETWDXXDYGAQT</sequence>